<proteinExistence type="inferred from homology"/>
<comment type="subcellular location">
    <subcellularLocation>
        <location evidence="4">Secreted</location>
    </subcellularLocation>
</comment>
<comment type="tissue specificity">
    <text evidence="4">Expressed by the venom duct.</text>
</comment>
<comment type="domain">
    <text evidence="4">The cysteine framework is XIV (C-C-C-C).</text>
</comment>
<comment type="PTM">
    <text evidence="4">Contains 2 disulfide bonds.</text>
</comment>
<protein>
    <recommendedName>
        <fullName evidence="3">Conotoxin Cl14.4</fullName>
    </recommendedName>
</protein>
<reference key="1">
    <citation type="journal article" date="2010" name="Mol. Phylogenet. Evol.">
        <title>Evolution of Conus peptide toxins: analysis of Conus californicus Reeve, 1844.</title>
        <authorList>
            <person name="Biggs J.S."/>
            <person name="Watkins M."/>
            <person name="Puillandre N."/>
            <person name="Ownby J.P."/>
            <person name="Lopez-Vera E."/>
            <person name="Christensen S."/>
            <person name="Moreno K.J."/>
            <person name="Bernaldez J."/>
            <person name="Licea-Navarro A."/>
            <person name="Corneli P.S."/>
            <person name="Olivera B.M."/>
        </authorList>
    </citation>
    <scope>NUCLEOTIDE SEQUENCE [GENOMIC DNA]</scope>
</reference>
<accession>D6C4J3</accession>
<organism>
    <name type="scientific">Californiconus californicus</name>
    <name type="common">California cone</name>
    <name type="synonym">Conus californicus</name>
    <dbReference type="NCBI Taxonomy" id="1736779"/>
    <lineage>
        <taxon>Eukaryota</taxon>
        <taxon>Metazoa</taxon>
        <taxon>Spiralia</taxon>
        <taxon>Lophotrochozoa</taxon>
        <taxon>Mollusca</taxon>
        <taxon>Gastropoda</taxon>
        <taxon>Caenogastropoda</taxon>
        <taxon>Neogastropoda</taxon>
        <taxon>Conoidea</taxon>
        <taxon>Conidae</taxon>
        <taxon>Californiconus</taxon>
    </lineage>
</organism>
<keyword id="KW-0027">Amidation</keyword>
<keyword id="KW-0165">Cleavage on pair of basic residues</keyword>
<keyword id="KW-1015">Disulfide bond</keyword>
<keyword id="KW-0528">Neurotoxin</keyword>
<keyword id="KW-0964">Secreted</keyword>
<keyword id="KW-0732">Signal</keyword>
<keyword id="KW-0800">Toxin</keyword>
<evidence type="ECO:0000250" key="1"/>
<evidence type="ECO:0000255" key="2"/>
<evidence type="ECO:0000303" key="3">
    <source>
    </source>
</evidence>
<evidence type="ECO:0000305" key="4"/>
<evidence type="ECO:0000305" key="5">
    <source>
    </source>
</evidence>
<sequence length="59" mass="6196">MKFLLFLSVALLLTSFIETVTVNKAGMERPSRALVGRGCPAECPDTCSSSGSCAPDFIG</sequence>
<name>CLE4_CONCL</name>
<dbReference type="EMBL" id="FJ959135">
    <property type="protein sequence ID" value="ADB93105.1"/>
    <property type="molecule type" value="Genomic_DNA"/>
</dbReference>
<dbReference type="ConoServer" id="4020">
    <property type="toxin name" value="Cal14.4 precursor"/>
</dbReference>
<dbReference type="GO" id="GO:0005576">
    <property type="term" value="C:extracellular region"/>
    <property type="evidence" value="ECO:0007669"/>
    <property type="project" value="UniProtKB-SubCell"/>
</dbReference>
<dbReference type="GO" id="GO:0090729">
    <property type="term" value="F:toxin activity"/>
    <property type="evidence" value="ECO:0007669"/>
    <property type="project" value="UniProtKB-KW"/>
</dbReference>
<feature type="signal peptide" evidence="2">
    <location>
        <begin position="1"/>
        <end position="19"/>
    </location>
</feature>
<feature type="propeptide" id="PRO_0000415020" evidence="1">
    <location>
        <begin position="20"/>
        <end position="36"/>
    </location>
</feature>
<feature type="peptide" id="PRO_0000415021" description="Conotoxin Cl14.4" evidence="5">
    <location>
        <begin position="38"/>
        <end position="58"/>
    </location>
</feature>
<feature type="modified residue" description="Isoleucine amide" evidence="4">
    <location>
        <position position="58"/>
    </location>
</feature>